<name>RR18_BARVE</name>
<feature type="chain" id="PRO_0000345569" description="Small ribosomal subunit protein bS18c">
    <location>
        <begin position="1"/>
        <end position="101"/>
    </location>
</feature>
<proteinExistence type="inferred from homology"/>
<geneLocation type="chloroplast"/>
<protein>
    <recommendedName>
        <fullName evidence="1">Small ribosomal subunit protein bS18c</fullName>
    </recommendedName>
    <alternativeName>
        <fullName evidence="2">30S ribosomal protein S18, chloroplastic</fullName>
    </alternativeName>
</protein>
<gene>
    <name evidence="1" type="primary">rps18</name>
</gene>
<sequence length="101" mass="12060">MNKSKRLFTKSKRSFRRRLPPIQSGDRIDYRNMSLISRFISEQGKILSRRVNRVTLKQQRLITIAIKQARILSLLPFLNNQKQFERSESTPRTTSLRTRKK</sequence>
<keyword id="KW-0150">Chloroplast</keyword>
<keyword id="KW-0934">Plastid</keyword>
<keyword id="KW-0687">Ribonucleoprotein</keyword>
<keyword id="KW-0689">Ribosomal protein</keyword>
<keyword id="KW-0694">RNA-binding</keyword>
<keyword id="KW-0699">rRNA-binding</keyword>
<reference key="1">
    <citation type="submission" date="2007-03" db="EMBL/GenBank/DDBJ databases">
        <title>Sequencing analysis of Barbarea verna chloroplast DNA.</title>
        <authorList>
            <person name="Hosouchi T."/>
            <person name="Tsuruoka H."/>
            <person name="Kotani H."/>
        </authorList>
    </citation>
    <scope>NUCLEOTIDE SEQUENCE [LARGE SCALE GENOMIC DNA]</scope>
</reference>
<evidence type="ECO:0000255" key="1">
    <source>
        <dbReference type="HAMAP-Rule" id="MF_00270"/>
    </source>
</evidence>
<evidence type="ECO:0000305" key="2"/>
<accession>A4QKC7</accession>
<organism>
    <name type="scientific">Barbarea verna</name>
    <name type="common">Land cress</name>
    <name type="synonym">Erysimum vernum</name>
    <dbReference type="NCBI Taxonomy" id="50458"/>
    <lineage>
        <taxon>Eukaryota</taxon>
        <taxon>Viridiplantae</taxon>
        <taxon>Streptophyta</taxon>
        <taxon>Embryophyta</taxon>
        <taxon>Tracheophyta</taxon>
        <taxon>Spermatophyta</taxon>
        <taxon>Magnoliopsida</taxon>
        <taxon>eudicotyledons</taxon>
        <taxon>Gunneridae</taxon>
        <taxon>Pentapetalae</taxon>
        <taxon>rosids</taxon>
        <taxon>malvids</taxon>
        <taxon>Brassicales</taxon>
        <taxon>Brassicaceae</taxon>
        <taxon>Cardamineae</taxon>
        <taxon>Barbarea</taxon>
    </lineage>
</organism>
<dbReference type="EMBL" id="AP009370">
    <property type="protein sequence ID" value="BAF50132.1"/>
    <property type="molecule type" value="Genomic_DNA"/>
</dbReference>
<dbReference type="RefSeq" id="YP_001123308.1">
    <property type="nucleotide sequence ID" value="NC_009269.1"/>
</dbReference>
<dbReference type="SMR" id="A4QKC7"/>
<dbReference type="GeneID" id="4961865"/>
<dbReference type="GO" id="GO:0009507">
    <property type="term" value="C:chloroplast"/>
    <property type="evidence" value="ECO:0007669"/>
    <property type="project" value="UniProtKB-SubCell"/>
</dbReference>
<dbReference type="GO" id="GO:0005763">
    <property type="term" value="C:mitochondrial small ribosomal subunit"/>
    <property type="evidence" value="ECO:0007669"/>
    <property type="project" value="TreeGrafter"/>
</dbReference>
<dbReference type="GO" id="GO:0070181">
    <property type="term" value="F:small ribosomal subunit rRNA binding"/>
    <property type="evidence" value="ECO:0007669"/>
    <property type="project" value="TreeGrafter"/>
</dbReference>
<dbReference type="GO" id="GO:0003735">
    <property type="term" value="F:structural constituent of ribosome"/>
    <property type="evidence" value="ECO:0007669"/>
    <property type="project" value="InterPro"/>
</dbReference>
<dbReference type="GO" id="GO:0006412">
    <property type="term" value="P:translation"/>
    <property type="evidence" value="ECO:0007669"/>
    <property type="project" value="UniProtKB-UniRule"/>
</dbReference>
<dbReference type="FunFam" id="4.10.640.10:FF:000002">
    <property type="entry name" value="30S ribosomal protein S18, chloroplastic"/>
    <property type="match status" value="1"/>
</dbReference>
<dbReference type="Gene3D" id="4.10.640.10">
    <property type="entry name" value="Ribosomal protein S18"/>
    <property type="match status" value="1"/>
</dbReference>
<dbReference type="HAMAP" id="MF_00270">
    <property type="entry name" value="Ribosomal_bS18"/>
    <property type="match status" value="1"/>
</dbReference>
<dbReference type="InterPro" id="IPR001648">
    <property type="entry name" value="Ribosomal_bS18"/>
</dbReference>
<dbReference type="InterPro" id="IPR018275">
    <property type="entry name" value="Ribosomal_bS18_CS"/>
</dbReference>
<dbReference type="InterPro" id="IPR036870">
    <property type="entry name" value="Ribosomal_bS18_sf"/>
</dbReference>
<dbReference type="NCBIfam" id="TIGR00165">
    <property type="entry name" value="S18"/>
    <property type="match status" value="1"/>
</dbReference>
<dbReference type="PANTHER" id="PTHR13479">
    <property type="entry name" value="30S RIBOSOMAL PROTEIN S18"/>
    <property type="match status" value="1"/>
</dbReference>
<dbReference type="PANTHER" id="PTHR13479:SF40">
    <property type="entry name" value="SMALL RIBOSOMAL SUBUNIT PROTEIN BS18M"/>
    <property type="match status" value="1"/>
</dbReference>
<dbReference type="Pfam" id="PF01084">
    <property type="entry name" value="Ribosomal_S18"/>
    <property type="match status" value="1"/>
</dbReference>
<dbReference type="PRINTS" id="PR00974">
    <property type="entry name" value="RIBOSOMALS18"/>
</dbReference>
<dbReference type="SUPFAM" id="SSF46911">
    <property type="entry name" value="Ribosomal protein S18"/>
    <property type="match status" value="1"/>
</dbReference>
<dbReference type="PROSITE" id="PS00057">
    <property type="entry name" value="RIBOSOMAL_S18"/>
    <property type="match status" value="1"/>
</dbReference>
<comment type="subunit">
    <text evidence="1">Part of the 30S ribosomal subunit.</text>
</comment>
<comment type="subcellular location">
    <subcellularLocation>
        <location>Plastid</location>
        <location>Chloroplast</location>
    </subcellularLocation>
</comment>
<comment type="similarity">
    <text evidence="1">Belongs to the bacterial ribosomal protein bS18 family.</text>
</comment>